<feature type="chain" id="PRO_0000321385" description="Adenine phosphoribosyltransferase">
    <location>
        <begin position="1"/>
        <end position="172"/>
    </location>
</feature>
<accession>Q46KW1</accession>
<gene>
    <name evidence="1" type="primary">apt</name>
    <name type="ordered locus">PMN2A_0375</name>
</gene>
<evidence type="ECO:0000255" key="1">
    <source>
        <dbReference type="HAMAP-Rule" id="MF_00004"/>
    </source>
</evidence>
<proteinExistence type="inferred from homology"/>
<comment type="function">
    <text evidence="1">Catalyzes a salvage reaction resulting in the formation of AMP, that is energically less costly than de novo synthesis.</text>
</comment>
<comment type="catalytic activity">
    <reaction evidence="1">
        <text>AMP + diphosphate = 5-phospho-alpha-D-ribose 1-diphosphate + adenine</text>
        <dbReference type="Rhea" id="RHEA:16609"/>
        <dbReference type="ChEBI" id="CHEBI:16708"/>
        <dbReference type="ChEBI" id="CHEBI:33019"/>
        <dbReference type="ChEBI" id="CHEBI:58017"/>
        <dbReference type="ChEBI" id="CHEBI:456215"/>
        <dbReference type="EC" id="2.4.2.7"/>
    </reaction>
</comment>
<comment type="pathway">
    <text evidence="1">Purine metabolism; AMP biosynthesis via salvage pathway; AMP from adenine: step 1/1.</text>
</comment>
<comment type="subunit">
    <text evidence="1">Homodimer.</text>
</comment>
<comment type="subcellular location">
    <subcellularLocation>
        <location evidence="1">Cytoplasm</location>
    </subcellularLocation>
</comment>
<comment type="similarity">
    <text evidence="1">Belongs to the purine/pyrimidine phosphoribosyltransferase family.</text>
</comment>
<protein>
    <recommendedName>
        <fullName evidence="1">Adenine phosphoribosyltransferase</fullName>
        <shortName evidence="1">APRT</shortName>
        <ecNumber evidence="1">2.4.2.7</ecNumber>
    </recommendedName>
</protein>
<sequence length="172" mass="19373">MDHLKKYITEINDYPKKGIVFKDLNPIYKEPKIWKELMFPLQNLISTKKPDYIAGIESRGFISASALAFKLEIGLITIRKPNKLPGEVIGTNYKLEYGEDRLEIQQNIMEKDSKIMLFDDLLATGGTAGAAGNLIKKAGGNLIGYAFLVELTELKGRENLDSNLFVETLIKY</sequence>
<reference key="1">
    <citation type="journal article" date="2007" name="PLoS Genet.">
        <title>Patterns and implications of gene gain and loss in the evolution of Prochlorococcus.</title>
        <authorList>
            <person name="Kettler G.C."/>
            <person name="Martiny A.C."/>
            <person name="Huang K."/>
            <person name="Zucker J."/>
            <person name="Coleman M.L."/>
            <person name="Rodrigue S."/>
            <person name="Chen F."/>
            <person name="Lapidus A."/>
            <person name="Ferriera S."/>
            <person name="Johnson J."/>
            <person name="Steglich C."/>
            <person name="Church G.M."/>
            <person name="Richardson P."/>
            <person name="Chisholm S.W."/>
        </authorList>
    </citation>
    <scope>NUCLEOTIDE SEQUENCE [LARGE SCALE GENOMIC DNA]</scope>
    <source>
        <strain>NATL2A</strain>
    </source>
</reference>
<dbReference type="EC" id="2.4.2.7" evidence="1"/>
<dbReference type="EMBL" id="CP000095">
    <property type="protein sequence ID" value="AAZ57867.1"/>
    <property type="molecule type" value="Genomic_DNA"/>
</dbReference>
<dbReference type="RefSeq" id="WP_011293909.1">
    <property type="nucleotide sequence ID" value="NC_007335.2"/>
</dbReference>
<dbReference type="SMR" id="Q46KW1"/>
<dbReference type="STRING" id="59920.PMN2A_0375"/>
<dbReference type="KEGG" id="pmn:PMN2A_0375"/>
<dbReference type="HOGENOM" id="CLU_063339_3_0_3"/>
<dbReference type="OrthoDB" id="9803963at2"/>
<dbReference type="PhylomeDB" id="Q46KW1"/>
<dbReference type="UniPathway" id="UPA00588">
    <property type="reaction ID" value="UER00646"/>
</dbReference>
<dbReference type="Proteomes" id="UP000002535">
    <property type="component" value="Chromosome"/>
</dbReference>
<dbReference type="GO" id="GO:0005737">
    <property type="term" value="C:cytoplasm"/>
    <property type="evidence" value="ECO:0007669"/>
    <property type="project" value="UniProtKB-SubCell"/>
</dbReference>
<dbReference type="GO" id="GO:0002055">
    <property type="term" value="F:adenine binding"/>
    <property type="evidence" value="ECO:0007669"/>
    <property type="project" value="TreeGrafter"/>
</dbReference>
<dbReference type="GO" id="GO:0003999">
    <property type="term" value="F:adenine phosphoribosyltransferase activity"/>
    <property type="evidence" value="ECO:0007669"/>
    <property type="project" value="UniProtKB-UniRule"/>
</dbReference>
<dbReference type="GO" id="GO:0016208">
    <property type="term" value="F:AMP binding"/>
    <property type="evidence" value="ECO:0007669"/>
    <property type="project" value="TreeGrafter"/>
</dbReference>
<dbReference type="GO" id="GO:0006168">
    <property type="term" value="P:adenine salvage"/>
    <property type="evidence" value="ECO:0007669"/>
    <property type="project" value="InterPro"/>
</dbReference>
<dbReference type="GO" id="GO:0044209">
    <property type="term" value="P:AMP salvage"/>
    <property type="evidence" value="ECO:0007669"/>
    <property type="project" value="UniProtKB-UniRule"/>
</dbReference>
<dbReference type="GO" id="GO:0006166">
    <property type="term" value="P:purine ribonucleoside salvage"/>
    <property type="evidence" value="ECO:0007669"/>
    <property type="project" value="UniProtKB-KW"/>
</dbReference>
<dbReference type="CDD" id="cd06223">
    <property type="entry name" value="PRTases_typeI"/>
    <property type="match status" value="1"/>
</dbReference>
<dbReference type="FunFam" id="3.40.50.2020:FF:000021">
    <property type="entry name" value="Adenine phosphoribosyltransferase"/>
    <property type="match status" value="1"/>
</dbReference>
<dbReference type="Gene3D" id="3.40.50.2020">
    <property type="match status" value="1"/>
</dbReference>
<dbReference type="HAMAP" id="MF_00004">
    <property type="entry name" value="Aden_phosphoribosyltr"/>
    <property type="match status" value="1"/>
</dbReference>
<dbReference type="InterPro" id="IPR005764">
    <property type="entry name" value="Ade_phspho_trans"/>
</dbReference>
<dbReference type="InterPro" id="IPR000836">
    <property type="entry name" value="PRibTrfase_dom"/>
</dbReference>
<dbReference type="InterPro" id="IPR029057">
    <property type="entry name" value="PRTase-like"/>
</dbReference>
<dbReference type="InterPro" id="IPR050054">
    <property type="entry name" value="UPRTase/APRTase"/>
</dbReference>
<dbReference type="NCBIfam" id="TIGR01090">
    <property type="entry name" value="apt"/>
    <property type="match status" value="1"/>
</dbReference>
<dbReference type="NCBIfam" id="NF002636">
    <property type="entry name" value="PRK02304.1-5"/>
    <property type="match status" value="1"/>
</dbReference>
<dbReference type="PANTHER" id="PTHR32315">
    <property type="entry name" value="ADENINE PHOSPHORIBOSYLTRANSFERASE"/>
    <property type="match status" value="1"/>
</dbReference>
<dbReference type="PANTHER" id="PTHR32315:SF3">
    <property type="entry name" value="ADENINE PHOSPHORIBOSYLTRANSFERASE"/>
    <property type="match status" value="1"/>
</dbReference>
<dbReference type="Pfam" id="PF00156">
    <property type="entry name" value="Pribosyltran"/>
    <property type="match status" value="1"/>
</dbReference>
<dbReference type="SUPFAM" id="SSF53271">
    <property type="entry name" value="PRTase-like"/>
    <property type="match status" value="1"/>
</dbReference>
<dbReference type="PROSITE" id="PS00103">
    <property type="entry name" value="PUR_PYR_PR_TRANSFER"/>
    <property type="match status" value="1"/>
</dbReference>
<organism>
    <name type="scientific">Prochlorococcus marinus (strain NATL2A)</name>
    <dbReference type="NCBI Taxonomy" id="59920"/>
    <lineage>
        <taxon>Bacteria</taxon>
        <taxon>Bacillati</taxon>
        <taxon>Cyanobacteriota</taxon>
        <taxon>Cyanophyceae</taxon>
        <taxon>Synechococcales</taxon>
        <taxon>Prochlorococcaceae</taxon>
        <taxon>Prochlorococcus</taxon>
    </lineage>
</organism>
<name>APT_PROMT</name>
<keyword id="KW-0963">Cytoplasm</keyword>
<keyword id="KW-0328">Glycosyltransferase</keyword>
<keyword id="KW-0660">Purine salvage</keyword>
<keyword id="KW-1185">Reference proteome</keyword>
<keyword id="KW-0808">Transferase</keyword>